<name>FABH_BURPS</name>
<feature type="chain" id="PRO_1000070224" description="Beta-ketoacyl-[acyl-carrier-protein] synthase III">
    <location>
        <begin position="1"/>
        <end position="329"/>
    </location>
</feature>
<feature type="region of interest" description="ACP-binding" evidence="1">
    <location>
        <begin position="257"/>
        <end position="261"/>
    </location>
</feature>
<feature type="active site" evidence="1">
    <location>
        <position position="123"/>
    </location>
</feature>
<feature type="active site" evidence="1">
    <location>
        <position position="256"/>
    </location>
</feature>
<feature type="active site" evidence="1">
    <location>
        <position position="286"/>
    </location>
</feature>
<proteinExistence type="inferred from homology"/>
<protein>
    <recommendedName>
        <fullName evidence="1">Beta-ketoacyl-[acyl-carrier-protein] synthase III</fullName>
        <shortName evidence="1">Beta-ketoacyl-ACP synthase III</shortName>
        <shortName evidence="1">KAS III</shortName>
        <ecNumber evidence="1">2.3.1.180</ecNumber>
    </recommendedName>
    <alternativeName>
        <fullName evidence="1">3-oxoacyl-[acyl-carrier-protein] synthase 3</fullName>
    </alternativeName>
    <alternativeName>
        <fullName evidence="1">3-oxoacyl-[acyl-carrier-protein] synthase III</fullName>
    </alternativeName>
</protein>
<keyword id="KW-0012">Acyltransferase</keyword>
<keyword id="KW-0963">Cytoplasm</keyword>
<keyword id="KW-0275">Fatty acid biosynthesis</keyword>
<keyword id="KW-0276">Fatty acid metabolism</keyword>
<keyword id="KW-0444">Lipid biosynthesis</keyword>
<keyword id="KW-0443">Lipid metabolism</keyword>
<keyword id="KW-0511">Multifunctional enzyme</keyword>
<keyword id="KW-1185">Reference proteome</keyword>
<keyword id="KW-0808">Transferase</keyword>
<gene>
    <name evidence="1" type="primary">fabH</name>
    <name type="ordered locus">BPSL2442</name>
</gene>
<dbReference type="EC" id="2.3.1.180" evidence="1"/>
<dbReference type="EMBL" id="BX571965">
    <property type="protein sequence ID" value="CAH36445.1"/>
    <property type="molecule type" value="Genomic_DNA"/>
</dbReference>
<dbReference type="RefSeq" id="WP_004524613.1">
    <property type="nucleotide sequence ID" value="NZ_CP009538.1"/>
</dbReference>
<dbReference type="RefSeq" id="YP_109034.1">
    <property type="nucleotide sequence ID" value="NC_006350.1"/>
</dbReference>
<dbReference type="SMR" id="Q63S83"/>
<dbReference type="STRING" id="272560.BPSL2442"/>
<dbReference type="KEGG" id="bps:BPSL2442"/>
<dbReference type="PATRIC" id="fig|272560.51.peg.2948"/>
<dbReference type="eggNOG" id="COG0332">
    <property type="taxonomic scope" value="Bacteria"/>
</dbReference>
<dbReference type="UniPathway" id="UPA00094"/>
<dbReference type="Proteomes" id="UP000000605">
    <property type="component" value="Chromosome 1"/>
</dbReference>
<dbReference type="GO" id="GO:0005737">
    <property type="term" value="C:cytoplasm"/>
    <property type="evidence" value="ECO:0007669"/>
    <property type="project" value="UniProtKB-SubCell"/>
</dbReference>
<dbReference type="GO" id="GO:0004315">
    <property type="term" value="F:3-oxoacyl-[acyl-carrier-protein] synthase activity"/>
    <property type="evidence" value="ECO:0007669"/>
    <property type="project" value="InterPro"/>
</dbReference>
<dbReference type="GO" id="GO:0033818">
    <property type="term" value="F:beta-ketoacyl-acyl-carrier-protein synthase III activity"/>
    <property type="evidence" value="ECO:0007669"/>
    <property type="project" value="UniProtKB-UniRule"/>
</dbReference>
<dbReference type="GO" id="GO:0006633">
    <property type="term" value="P:fatty acid biosynthetic process"/>
    <property type="evidence" value="ECO:0007669"/>
    <property type="project" value="UniProtKB-UniRule"/>
</dbReference>
<dbReference type="CDD" id="cd00830">
    <property type="entry name" value="KAS_III"/>
    <property type="match status" value="1"/>
</dbReference>
<dbReference type="FunFam" id="3.40.47.10:FF:000004">
    <property type="entry name" value="3-oxoacyl-[acyl-carrier-protein] synthase 3"/>
    <property type="match status" value="1"/>
</dbReference>
<dbReference type="Gene3D" id="3.40.47.10">
    <property type="match status" value="2"/>
</dbReference>
<dbReference type="HAMAP" id="MF_01815">
    <property type="entry name" value="FabH"/>
    <property type="match status" value="1"/>
</dbReference>
<dbReference type="InterPro" id="IPR013747">
    <property type="entry name" value="ACP_syn_III_C"/>
</dbReference>
<dbReference type="InterPro" id="IPR013751">
    <property type="entry name" value="ACP_syn_III_N"/>
</dbReference>
<dbReference type="InterPro" id="IPR004655">
    <property type="entry name" value="FabH"/>
</dbReference>
<dbReference type="InterPro" id="IPR016039">
    <property type="entry name" value="Thiolase-like"/>
</dbReference>
<dbReference type="NCBIfam" id="TIGR00747">
    <property type="entry name" value="fabH"/>
    <property type="match status" value="1"/>
</dbReference>
<dbReference type="NCBIfam" id="NF006829">
    <property type="entry name" value="PRK09352.1"/>
    <property type="match status" value="1"/>
</dbReference>
<dbReference type="PANTHER" id="PTHR43091">
    <property type="entry name" value="3-OXOACYL-[ACYL-CARRIER-PROTEIN] SYNTHASE"/>
    <property type="match status" value="1"/>
</dbReference>
<dbReference type="PANTHER" id="PTHR43091:SF1">
    <property type="entry name" value="BETA-KETOACYL-[ACYL-CARRIER-PROTEIN] SYNTHASE III, CHLOROPLASTIC"/>
    <property type="match status" value="1"/>
</dbReference>
<dbReference type="Pfam" id="PF08545">
    <property type="entry name" value="ACP_syn_III"/>
    <property type="match status" value="1"/>
</dbReference>
<dbReference type="Pfam" id="PF08541">
    <property type="entry name" value="ACP_syn_III_C"/>
    <property type="match status" value="1"/>
</dbReference>
<dbReference type="SUPFAM" id="SSF53901">
    <property type="entry name" value="Thiolase-like"/>
    <property type="match status" value="1"/>
</dbReference>
<reference key="1">
    <citation type="journal article" date="2004" name="Proc. Natl. Acad. Sci. U.S.A.">
        <title>Genomic plasticity of the causative agent of melioidosis, Burkholderia pseudomallei.</title>
        <authorList>
            <person name="Holden M.T.G."/>
            <person name="Titball R.W."/>
            <person name="Peacock S.J."/>
            <person name="Cerdeno-Tarraga A.-M."/>
            <person name="Atkins T."/>
            <person name="Crossman L.C."/>
            <person name="Pitt T."/>
            <person name="Churcher C."/>
            <person name="Mungall K.L."/>
            <person name="Bentley S.D."/>
            <person name="Sebaihia M."/>
            <person name="Thomson N.R."/>
            <person name="Bason N."/>
            <person name="Beacham I.R."/>
            <person name="Brooks K."/>
            <person name="Brown K.A."/>
            <person name="Brown N.F."/>
            <person name="Challis G.L."/>
            <person name="Cherevach I."/>
            <person name="Chillingworth T."/>
            <person name="Cronin A."/>
            <person name="Crossett B."/>
            <person name="Davis P."/>
            <person name="DeShazer D."/>
            <person name="Feltwell T."/>
            <person name="Fraser A."/>
            <person name="Hance Z."/>
            <person name="Hauser H."/>
            <person name="Holroyd S."/>
            <person name="Jagels K."/>
            <person name="Keith K.E."/>
            <person name="Maddison M."/>
            <person name="Moule S."/>
            <person name="Price C."/>
            <person name="Quail M.A."/>
            <person name="Rabbinowitsch E."/>
            <person name="Rutherford K."/>
            <person name="Sanders M."/>
            <person name="Simmonds M."/>
            <person name="Songsivilai S."/>
            <person name="Stevens K."/>
            <person name="Tumapa S."/>
            <person name="Vesaratchavest M."/>
            <person name="Whitehead S."/>
            <person name="Yeats C."/>
            <person name="Barrell B.G."/>
            <person name="Oyston P.C.F."/>
            <person name="Parkhill J."/>
        </authorList>
    </citation>
    <scope>NUCLEOTIDE SEQUENCE [LARGE SCALE GENOMIC DNA]</scope>
    <source>
        <strain>K96243</strain>
    </source>
</reference>
<accession>Q63S83</accession>
<sequence>MAQSTLYSRVLGTGSYLPPDRVTNQELADRLAKDGIETSDEWIVARTGIRARHFAAPDVTTSDLALVAAQRAIEAADVDPQSIDLIIVATSTPDFVFPSTACLLQNKLGIKNGGAAFDVQAVCSGFAYALATADSFIRTGQHRTALVIGAETFSRILDFKDRTTCVLFGDGAGAVVLSASEEPGILGSALHADGSYSNILCTPGNVNRGVIAGSAFLHMDGQAVFKLAVNVLEKVAVEALSKAELASEQVDWLIPHQANIRIMTSTCRKLGLPQERMIVTVDEHGNTSAASIPLALDVAVRDGRIKRGQHVLIEGVGGGFTWGASVFRF</sequence>
<evidence type="ECO:0000255" key="1">
    <source>
        <dbReference type="HAMAP-Rule" id="MF_01815"/>
    </source>
</evidence>
<organism>
    <name type="scientific">Burkholderia pseudomallei (strain K96243)</name>
    <dbReference type="NCBI Taxonomy" id="272560"/>
    <lineage>
        <taxon>Bacteria</taxon>
        <taxon>Pseudomonadati</taxon>
        <taxon>Pseudomonadota</taxon>
        <taxon>Betaproteobacteria</taxon>
        <taxon>Burkholderiales</taxon>
        <taxon>Burkholderiaceae</taxon>
        <taxon>Burkholderia</taxon>
        <taxon>pseudomallei group</taxon>
    </lineage>
</organism>
<comment type="function">
    <text evidence="1">Catalyzes the condensation reaction of fatty acid synthesis by the addition to an acyl acceptor of two carbons from malonyl-ACP. Catalyzes the first condensation reaction which initiates fatty acid synthesis and may therefore play a role in governing the total rate of fatty acid production. Possesses both acetoacetyl-ACP synthase and acetyl transacylase activities. Its substrate specificity determines the biosynthesis of branched-chain and/or straight-chain of fatty acids.</text>
</comment>
<comment type="catalytic activity">
    <reaction evidence="1">
        <text>malonyl-[ACP] + acetyl-CoA + H(+) = 3-oxobutanoyl-[ACP] + CO2 + CoA</text>
        <dbReference type="Rhea" id="RHEA:12080"/>
        <dbReference type="Rhea" id="RHEA-COMP:9623"/>
        <dbReference type="Rhea" id="RHEA-COMP:9625"/>
        <dbReference type="ChEBI" id="CHEBI:15378"/>
        <dbReference type="ChEBI" id="CHEBI:16526"/>
        <dbReference type="ChEBI" id="CHEBI:57287"/>
        <dbReference type="ChEBI" id="CHEBI:57288"/>
        <dbReference type="ChEBI" id="CHEBI:78449"/>
        <dbReference type="ChEBI" id="CHEBI:78450"/>
        <dbReference type="EC" id="2.3.1.180"/>
    </reaction>
</comment>
<comment type="pathway">
    <text evidence="1">Lipid metabolism; fatty acid biosynthesis.</text>
</comment>
<comment type="subunit">
    <text evidence="1">Homodimer.</text>
</comment>
<comment type="subcellular location">
    <subcellularLocation>
        <location evidence="1">Cytoplasm</location>
    </subcellularLocation>
</comment>
<comment type="domain">
    <text evidence="1">The last Arg residue of the ACP-binding site is essential for the weak association between ACP/AcpP and FabH.</text>
</comment>
<comment type="similarity">
    <text evidence="1">Belongs to the thiolase-like superfamily. FabH family.</text>
</comment>